<accession>P70752</accession>
<organism evidence="9">
    <name type="scientific">Methylosulfonomonas methylovora</name>
    <dbReference type="NCBI Taxonomy" id="50057"/>
    <lineage>
        <taxon>Bacteria</taxon>
        <taxon>Pseudomonadati</taxon>
        <taxon>Pseudomonadota</taxon>
        <taxon>Alphaproteobacteria</taxon>
        <taxon>Hyphomicrobiales</taxon>
        <taxon>Methylosulfonomonas</taxon>
    </lineage>
</organism>
<keyword id="KW-0001">2Fe-2S</keyword>
<keyword id="KW-0963">Cytoplasm</keyword>
<keyword id="KW-0903">Direct protein sequencing</keyword>
<keyword id="KW-0249">Electron transport</keyword>
<keyword id="KW-0408">Iron</keyword>
<keyword id="KW-0411">Iron-sulfur</keyword>
<keyword id="KW-0479">Metal-binding</keyword>
<keyword id="KW-0503">Monooxygenase</keyword>
<keyword id="KW-0520">NAD</keyword>
<keyword id="KW-0560">Oxidoreductase</keyword>
<keyword id="KW-0813">Transport</keyword>
<feature type="initiator methionine" description="Removed" evidence="4">
    <location>
        <position position="1"/>
    </location>
</feature>
<feature type="chain" id="PRO_0000430803" description="Methanesulfonate monooxygenase ferredoxin subunit">
    <location>
        <begin position="2"/>
        <end position="123"/>
    </location>
</feature>
<feature type="domain" description="Rieske" evidence="2">
    <location>
        <begin position="4"/>
        <end position="99"/>
    </location>
</feature>
<feature type="binding site" evidence="1">
    <location>
        <position position="43"/>
    </location>
    <ligand>
        <name>[2Fe-2S] cluster</name>
        <dbReference type="ChEBI" id="CHEBI:190135"/>
    </ligand>
</feature>
<feature type="binding site" evidence="1">
    <location>
        <position position="45"/>
    </location>
    <ligand>
        <name>[2Fe-2S] cluster</name>
        <dbReference type="ChEBI" id="CHEBI:190135"/>
    </ligand>
</feature>
<feature type="binding site" evidence="1">
    <location>
        <position position="63"/>
    </location>
    <ligand>
        <name>[2Fe-2S] cluster</name>
        <dbReference type="ChEBI" id="CHEBI:190135"/>
    </ligand>
</feature>
<feature type="binding site" evidence="1">
    <location>
        <position position="66"/>
    </location>
    <ligand>
        <name>[2Fe-2S] cluster</name>
        <dbReference type="ChEBI" id="CHEBI:190135"/>
    </ligand>
</feature>
<comment type="function">
    <text evidence="4">Methanesulfonate monooxygenase (MSAMO) mediates the primary degradation of methanesulfonic acid (MSA) to produce formaldehyd and inorganic sulfite by initial hydroxylation of the carbon atom prior to spontaneous cleavage of the unstable hydroxymethanesulfonic acid. MSAMO has a restricted substrate range that includes only the short-chain aliphatic sulfonates (methane- to butanesulfonate) and excludes all larger molecules, such as arylsulfonates and aromatic sulfonates. All MSAMO components are required for enzyme activity.</text>
</comment>
<comment type="catalytic activity">
    <reaction evidence="4">
        <text>methanesulfonate + NADH + O2 = sulfite + formaldehyde + NAD(+) + H2O</text>
        <dbReference type="Rhea" id="RHEA:26077"/>
        <dbReference type="ChEBI" id="CHEBI:15377"/>
        <dbReference type="ChEBI" id="CHEBI:15379"/>
        <dbReference type="ChEBI" id="CHEBI:16842"/>
        <dbReference type="ChEBI" id="CHEBI:17359"/>
        <dbReference type="ChEBI" id="CHEBI:25224"/>
        <dbReference type="ChEBI" id="CHEBI:57540"/>
        <dbReference type="ChEBI" id="CHEBI:57945"/>
        <dbReference type="EC" id="1.14.13.111"/>
    </reaction>
</comment>
<comment type="cofactor">
    <cofactor evidence="1 2 6">
        <name>[2Fe-2S] cluster</name>
        <dbReference type="ChEBI" id="CHEBI:190135"/>
    </cofactor>
    <text evidence="1 2 6">Binds 1 [2Fe-2S] cluster per subunit.</text>
</comment>
<comment type="activity regulation">
    <text evidence="4">MSAMO is inhibited by metal chelators (such as bathophenanthroline, bathocuprione, neocuprione, alpha-alpha-dipyridil and sodium EDTA) and by sodium azide, sodium arsenate and potassium cyanide.</text>
</comment>
<comment type="biophysicochemical properties">
    <kinetics>
        <KM evidence="4">48 uM for NADH</KM>
        <KM evidence="4">61.5 uM for ethane sulfonic acid</KM>
        <Vmax evidence="4">65.5 nmol/min/mg enzyme with NADH as substrate</Vmax>
        <Vmax evidence="4">38.7 nmol/min/mg enzyme with ethane sulfonic acid as substrate</Vmax>
        <text evidence="4">Cell-free extracts of MSA-grown strain M2 have been used. Vmax of a cytoplasmic fraction has shown to be lower as was that of a reconstituted enzyme from partially purified fractions which was increased by addition of FAD and Fe(2+).</text>
    </kinetics>
</comment>
<comment type="subunit">
    <text evidence="5 7">The MSA monooxygenase system consists of 4 proteins: the 2 subunits of the hydroxylase component (MsmA and MsmB), a ferredoxin (MsmC) and a ferredoxin reductase (MsmD). The ferredoxin component is dimeric.</text>
</comment>
<comment type="subcellular location">
    <subcellularLocation>
        <location evidence="4">Cytoplasm</location>
    </subcellularLocation>
</comment>
<comment type="induction">
    <text evidence="3">The msmABCD operon is induced by methanesulfonic acid (MSA).</text>
</comment>
<comment type="similarity">
    <text evidence="8">Belongs to the bacterial ring-hydroxylating dioxygenase ferredoxin component family.</text>
</comment>
<gene>
    <name evidence="5" type="primary">msmC</name>
</gene>
<evidence type="ECO:0000250" key="1">
    <source>
        <dbReference type="UniProtKB" id="Q00458"/>
    </source>
</evidence>
<evidence type="ECO:0000255" key="2">
    <source>
        <dbReference type="PROSITE-ProRule" id="PRU00628"/>
    </source>
</evidence>
<evidence type="ECO:0000269" key="3">
    <source>
    </source>
</evidence>
<evidence type="ECO:0000269" key="4">
    <source>
    </source>
</evidence>
<evidence type="ECO:0000303" key="5">
    <source>
    </source>
</evidence>
<evidence type="ECO:0000303" key="6">
    <source>
    </source>
</evidence>
<evidence type="ECO:0000303" key="7">
    <source>
    </source>
</evidence>
<evidence type="ECO:0000305" key="8"/>
<evidence type="ECO:0000312" key="9">
    <source>
        <dbReference type="EMBL" id="AAC35388.1"/>
    </source>
</evidence>
<dbReference type="EC" id="1.14.13.111" evidence="4"/>
<dbReference type="EMBL" id="AF091716">
    <property type="protein sequence ID" value="AAC35388.1"/>
    <property type="molecule type" value="Genomic_DNA"/>
</dbReference>
<dbReference type="SMR" id="P70752"/>
<dbReference type="BioCyc" id="MetaCyc:MONOMER-14213"/>
<dbReference type="GO" id="GO:0005737">
    <property type="term" value="C:cytoplasm"/>
    <property type="evidence" value="ECO:0007669"/>
    <property type="project" value="UniProtKB-SubCell"/>
</dbReference>
<dbReference type="GO" id="GO:0051537">
    <property type="term" value="F:2 iron, 2 sulfur cluster binding"/>
    <property type="evidence" value="ECO:0007669"/>
    <property type="project" value="UniProtKB-KW"/>
</dbReference>
<dbReference type="GO" id="GO:0046872">
    <property type="term" value="F:metal ion binding"/>
    <property type="evidence" value="ECO:0007669"/>
    <property type="project" value="UniProtKB-KW"/>
</dbReference>
<dbReference type="GO" id="GO:0018648">
    <property type="term" value="F:methanesulfonate monooxygenase activity"/>
    <property type="evidence" value="ECO:0000314"/>
    <property type="project" value="UniProtKB"/>
</dbReference>
<dbReference type="FunFam" id="2.102.10.10:FF:000048">
    <property type="entry name" value="Benzene 1,2-dioxygenase system ferredoxin component, putative"/>
    <property type="match status" value="1"/>
</dbReference>
<dbReference type="Gene3D" id="2.102.10.10">
    <property type="entry name" value="Rieske [2Fe-2S] iron-sulphur domain"/>
    <property type="match status" value="1"/>
</dbReference>
<dbReference type="InterPro" id="IPR017941">
    <property type="entry name" value="Rieske_2Fe-2S"/>
</dbReference>
<dbReference type="InterPro" id="IPR036922">
    <property type="entry name" value="Rieske_2Fe-2S_sf"/>
</dbReference>
<dbReference type="Pfam" id="PF00355">
    <property type="entry name" value="Rieske"/>
    <property type="match status" value="1"/>
</dbReference>
<dbReference type="SUPFAM" id="SSF50022">
    <property type="entry name" value="ISP domain"/>
    <property type="match status" value="1"/>
</dbReference>
<dbReference type="PROSITE" id="PS51296">
    <property type="entry name" value="RIESKE"/>
    <property type="match status" value="1"/>
</dbReference>
<protein>
    <recommendedName>
        <fullName evidence="8">Methanesulfonate monooxygenase ferredoxin subunit</fullName>
    </recommendedName>
    <alternativeName>
        <fullName evidence="7">Methanesulfonic acid monooxygenase electron transfer subunit</fullName>
    </alternativeName>
    <alternativeName>
        <fullName evidence="7">Methanesulfonic acid monooxygenase ferredoxin subunit</fullName>
        <shortName evidence="8">MSA monooxygenase ferredoxin subunit</shortName>
        <shortName evidence="8">MSAMO ferredoxin subunit</shortName>
        <ecNumber evidence="4">1.14.13.111</ecNumber>
    </alternativeName>
</protein>
<sequence length="123" mass="13880">MSWTYLCDAADVAPNSLKLVDANDIRVVVANYGSGFRAIPPICPHMEEPLDESGVIANCVLTCTKHLWAWNLISLELLGETEKPLKTYELKEEDGKLLAFIAEELTYDFEEEDDMDDDFFSKS</sequence>
<reference evidence="9" key="1">
    <citation type="journal article" date="1999" name="J. Bacteriol.">
        <title>Molecular analysis of a novel methanesulfonic acid monooxygenase from the methylotroph Methylosulfonomonas methylovora.</title>
        <authorList>
            <person name="de Marco P."/>
            <person name="Moradas-Ferreira P."/>
            <person name="Higgins T.P."/>
            <person name="McDonald I."/>
            <person name="Kenna E.M."/>
            <person name="Murrell J.C."/>
        </authorList>
    </citation>
    <scope>NUCLEOTIDE SEQUENCE [GENOMIC DNA]</scope>
    <scope>SUBUNIT</scope>
    <source>
        <strain evidence="9">M2</strain>
    </source>
</reference>
<reference evidence="9" key="2">
    <citation type="journal article" date="2006" name="Appl. Environ. Microbiol.">
        <title>Identification, mutagenesis, and transcriptional analysis of the methanesulfonate transport operon of Methylosulfonomonas methylovora.</title>
        <authorList>
            <person name="Jamshad M."/>
            <person name="De Marco P."/>
            <person name="Pacheco C.C."/>
            <person name="Hanczar T."/>
            <person name="Murrell J.C."/>
        </authorList>
    </citation>
    <scope>NUCLEOTIDE SEQUENCE [GENOMIC DNA]</scope>
    <scope>INDUCTION</scope>
    <source>
        <strain evidence="9">M2</strain>
    </source>
</reference>
<reference key="3">
    <citation type="journal article" date="1997" name="J. Bacteriol.">
        <title>Purification and molecular characterization of the electron transfer protein of methanesulfonic acid monooxygenase.</title>
        <authorList>
            <person name="Higgins T.P."/>
            <person name="De Marco P."/>
            <person name="Murrell J.C."/>
        </authorList>
    </citation>
    <scope>PROTEIN SEQUENCE OF 2-39</scope>
    <scope>COFACTOR</scope>
    <scope>SUBUNIT</scope>
    <source>
        <strain evidence="9">M2</strain>
    </source>
</reference>
<reference key="4">
    <citation type="journal article" date="1996" name="Microbiology">
        <title>Metabolism of methanesulfonic acid involves a multicomponent monooxygenase enzyme.</title>
        <authorList>
            <person name="Higgins T.P."/>
            <person name="Davey M."/>
            <person name="Trickett J."/>
            <person name="Kelly D.P."/>
            <person name="Murrell J.C."/>
        </authorList>
    </citation>
    <scope>FUNCTION</scope>
    <scope>CATALYTIC ACTIVITY</scope>
    <scope>INDUCTION</scope>
    <scope>ACTIVITY REGULATION</scope>
    <scope>SUBCELLULAR LOCATION</scope>
    <scope>BIOPHYSICOCHEMICAL PROPERTIES</scope>
</reference>
<proteinExistence type="evidence at protein level"/>
<name>MSMC_METHY</name>